<evidence type="ECO:0000250" key="1"/>
<evidence type="ECO:0000250" key="2">
    <source>
        <dbReference type="UniProtKB" id="P00157"/>
    </source>
</evidence>
<evidence type="ECO:0000255" key="3">
    <source>
        <dbReference type="PROSITE-ProRule" id="PRU00967"/>
    </source>
</evidence>
<evidence type="ECO:0000255" key="4">
    <source>
        <dbReference type="PROSITE-ProRule" id="PRU00968"/>
    </source>
</evidence>
<name>CYB_CYNPA</name>
<geneLocation type="mitochondrion"/>
<proteinExistence type="inferred from homology"/>
<gene>
    <name type="primary">MT-CYB</name>
    <name type="synonym">COB</name>
    <name type="synonym">CYTB</name>
    <name type="synonym">MTCYB</name>
</gene>
<comment type="function">
    <text evidence="2">Component of the ubiquinol-cytochrome c reductase complex (complex III or cytochrome b-c1 complex) that is part of the mitochondrial respiratory chain. The b-c1 complex mediates electron transfer from ubiquinol to cytochrome c. Contributes to the generation of a proton gradient across the mitochondrial membrane that is then used for ATP synthesis.</text>
</comment>
<comment type="cofactor">
    <cofactor evidence="2">
        <name>heme b</name>
        <dbReference type="ChEBI" id="CHEBI:60344"/>
    </cofactor>
    <text evidence="2">Binds 2 heme b groups non-covalently.</text>
</comment>
<comment type="subunit">
    <text evidence="2">The cytochrome bc1 complex contains 11 subunits: 3 respiratory subunits (MT-CYB, CYC1 and UQCRFS1), 2 core proteins (UQCRC1 and UQCRC2) and 6 low-molecular weight proteins (UQCRH/QCR6, UQCRB/QCR7, UQCRQ/QCR8, UQCR10/QCR9, UQCR11/QCR10 and a cleavage product of UQCRFS1). This cytochrome bc1 complex then forms a dimer.</text>
</comment>
<comment type="subcellular location">
    <subcellularLocation>
        <location evidence="2">Mitochondrion inner membrane</location>
        <topology evidence="2">Multi-pass membrane protein</topology>
    </subcellularLocation>
</comment>
<comment type="miscellaneous">
    <text evidence="1">Heme 1 (or BL or b562) is low-potential and absorbs at about 562 nm, and heme 2 (or BH or b566) is high-potential and absorbs at about 566 nm.</text>
</comment>
<comment type="similarity">
    <text evidence="3 4">Belongs to the cytochrome b family.</text>
</comment>
<comment type="caution">
    <text evidence="2">The full-length protein contains only eight transmembrane helices, not nine as predicted by bioinformatics tools.</text>
</comment>
<organism>
    <name type="scientific">Cynomys parvidens</name>
    <name type="common">Utah prairie dog</name>
    <dbReference type="NCBI Taxonomy" id="99827"/>
    <lineage>
        <taxon>Eukaryota</taxon>
        <taxon>Metazoa</taxon>
        <taxon>Chordata</taxon>
        <taxon>Craniata</taxon>
        <taxon>Vertebrata</taxon>
        <taxon>Euteleostomi</taxon>
        <taxon>Mammalia</taxon>
        <taxon>Eutheria</taxon>
        <taxon>Euarchontoglires</taxon>
        <taxon>Glires</taxon>
        <taxon>Rodentia</taxon>
        <taxon>Sciuromorpha</taxon>
        <taxon>Sciuridae</taxon>
        <taxon>Xerinae</taxon>
        <taxon>Marmotini</taxon>
        <taxon>Cynomys</taxon>
    </lineage>
</organism>
<feature type="chain" id="PRO_0000257890" description="Cytochrome b">
    <location>
        <begin position="1"/>
        <end position="379"/>
    </location>
</feature>
<feature type="transmembrane region" description="Helical" evidence="2">
    <location>
        <begin position="33"/>
        <end position="53"/>
    </location>
</feature>
<feature type="transmembrane region" description="Helical" evidence="2">
    <location>
        <begin position="77"/>
        <end position="98"/>
    </location>
</feature>
<feature type="transmembrane region" description="Helical" evidence="2">
    <location>
        <begin position="113"/>
        <end position="133"/>
    </location>
</feature>
<feature type="transmembrane region" description="Helical" evidence="2">
    <location>
        <begin position="178"/>
        <end position="198"/>
    </location>
</feature>
<feature type="transmembrane region" description="Helical" evidence="2">
    <location>
        <begin position="226"/>
        <end position="246"/>
    </location>
</feature>
<feature type="transmembrane region" description="Helical" evidence="2">
    <location>
        <begin position="288"/>
        <end position="308"/>
    </location>
</feature>
<feature type="transmembrane region" description="Helical" evidence="2">
    <location>
        <begin position="320"/>
        <end position="340"/>
    </location>
</feature>
<feature type="transmembrane region" description="Helical" evidence="2">
    <location>
        <begin position="347"/>
        <end position="367"/>
    </location>
</feature>
<feature type="binding site" description="axial binding residue" evidence="2">
    <location>
        <position position="83"/>
    </location>
    <ligand>
        <name>heme b</name>
        <dbReference type="ChEBI" id="CHEBI:60344"/>
        <label>b562</label>
    </ligand>
    <ligandPart>
        <name>Fe</name>
        <dbReference type="ChEBI" id="CHEBI:18248"/>
    </ligandPart>
</feature>
<feature type="binding site" description="axial binding residue" evidence="2">
    <location>
        <position position="97"/>
    </location>
    <ligand>
        <name>heme b</name>
        <dbReference type="ChEBI" id="CHEBI:60344"/>
        <label>b566</label>
    </ligand>
    <ligandPart>
        <name>Fe</name>
        <dbReference type="ChEBI" id="CHEBI:18248"/>
    </ligandPart>
</feature>
<feature type="binding site" description="axial binding residue" evidence="2">
    <location>
        <position position="182"/>
    </location>
    <ligand>
        <name>heme b</name>
        <dbReference type="ChEBI" id="CHEBI:60344"/>
        <label>b562</label>
    </ligand>
    <ligandPart>
        <name>Fe</name>
        <dbReference type="ChEBI" id="CHEBI:18248"/>
    </ligandPart>
</feature>
<feature type="binding site" description="axial binding residue" evidence="2">
    <location>
        <position position="196"/>
    </location>
    <ligand>
        <name>heme b</name>
        <dbReference type="ChEBI" id="CHEBI:60344"/>
        <label>b566</label>
    </ligand>
    <ligandPart>
        <name>Fe</name>
        <dbReference type="ChEBI" id="CHEBI:18248"/>
    </ligandPart>
</feature>
<feature type="binding site" evidence="2">
    <location>
        <position position="201"/>
    </location>
    <ligand>
        <name>a ubiquinone</name>
        <dbReference type="ChEBI" id="CHEBI:16389"/>
    </ligand>
</feature>
<sequence length="379" mass="42962">MTNTRKTHPLIKIINHSFIDLPTPSNISAWWNFGSLLGLCLVIQILTGLFLAMHYTSDTMTAFSSITHICRDVNYGWLIRYMHANGASMFFICLFLHVGRGLYYGSYTYFETWNIGVILLFVVMATAFMGYVLPWGQMSFWGATVITNLLSAIPYIGTTLVEWIWGGFSVDKATLTRFFAFHFVLPFIIAALVMVHLLFLHETGSNNPSGLISDSDKIPFHPYYTIKDILGVLLLIMALMILVLFSPDLLGDPDNYTPANPLSTPPHIKPEWYFLFAYAILRSIPNKLGGVLALVFSILILTLFPLLHVSKQRSMMFRPLSQCMFWFLVADLLTLTWIGGQPVEHPFITIGQLASILYFTIILLMLPIVSLIENKLLKW</sequence>
<accession>Q9T3Y3</accession>
<keyword id="KW-0249">Electron transport</keyword>
<keyword id="KW-0349">Heme</keyword>
<keyword id="KW-0408">Iron</keyword>
<keyword id="KW-0472">Membrane</keyword>
<keyword id="KW-0479">Metal-binding</keyword>
<keyword id="KW-0496">Mitochondrion</keyword>
<keyword id="KW-0999">Mitochondrion inner membrane</keyword>
<keyword id="KW-0679">Respiratory chain</keyword>
<keyword id="KW-0812">Transmembrane</keyword>
<keyword id="KW-1133">Transmembrane helix</keyword>
<keyword id="KW-0813">Transport</keyword>
<keyword id="KW-0830">Ubiquinone</keyword>
<dbReference type="EMBL" id="AF157922">
    <property type="protein sequence ID" value="AAD50206.1"/>
    <property type="molecule type" value="Genomic_DNA"/>
</dbReference>
<dbReference type="EMBL" id="AF157929">
    <property type="protein sequence ID" value="AAD50213.1"/>
    <property type="molecule type" value="Genomic_DNA"/>
</dbReference>
<dbReference type="SMR" id="Q9T3Y3"/>
<dbReference type="GO" id="GO:0005743">
    <property type="term" value="C:mitochondrial inner membrane"/>
    <property type="evidence" value="ECO:0007669"/>
    <property type="project" value="UniProtKB-SubCell"/>
</dbReference>
<dbReference type="GO" id="GO:0045275">
    <property type="term" value="C:respiratory chain complex III"/>
    <property type="evidence" value="ECO:0007669"/>
    <property type="project" value="InterPro"/>
</dbReference>
<dbReference type="GO" id="GO:0046872">
    <property type="term" value="F:metal ion binding"/>
    <property type="evidence" value="ECO:0007669"/>
    <property type="project" value="UniProtKB-KW"/>
</dbReference>
<dbReference type="GO" id="GO:0008121">
    <property type="term" value="F:ubiquinol-cytochrome-c reductase activity"/>
    <property type="evidence" value="ECO:0007669"/>
    <property type="project" value="InterPro"/>
</dbReference>
<dbReference type="GO" id="GO:0006122">
    <property type="term" value="P:mitochondrial electron transport, ubiquinol to cytochrome c"/>
    <property type="evidence" value="ECO:0007669"/>
    <property type="project" value="TreeGrafter"/>
</dbReference>
<dbReference type="CDD" id="cd00290">
    <property type="entry name" value="cytochrome_b_C"/>
    <property type="match status" value="1"/>
</dbReference>
<dbReference type="CDD" id="cd00284">
    <property type="entry name" value="Cytochrome_b_N"/>
    <property type="match status" value="1"/>
</dbReference>
<dbReference type="FunFam" id="1.20.810.10:FF:000002">
    <property type="entry name" value="Cytochrome b"/>
    <property type="match status" value="1"/>
</dbReference>
<dbReference type="Gene3D" id="1.20.810.10">
    <property type="entry name" value="Cytochrome Bc1 Complex, Chain C"/>
    <property type="match status" value="1"/>
</dbReference>
<dbReference type="InterPro" id="IPR005798">
    <property type="entry name" value="Cyt_b/b6_C"/>
</dbReference>
<dbReference type="InterPro" id="IPR036150">
    <property type="entry name" value="Cyt_b/b6_C_sf"/>
</dbReference>
<dbReference type="InterPro" id="IPR005797">
    <property type="entry name" value="Cyt_b/b6_N"/>
</dbReference>
<dbReference type="InterPro" id="IPR027387">
    <property type="entry name" value="Cytb/b6-like_sf"/>
</dbReference>
<dbReference type="InterPro" id="IPR030689">
    <property type="entry name" value="Cytochrome_b"/>
</dbReference>
<dbReference type="InterPro" id="IPR048260">
    <property type="entry name" value="Cytochrome_b_C_euk/bac"/>
</dbReference>
<dbReference type="InterPro" id="IPR048259">
    <property type="entry name" value="Cytochrome_b_N_euk/bac"/>
</dbReference>
<dbReference type="InterPro" id="IPR016174">
    <property type="entry name" value="Di-haem_cyt_TM"/>
</dbReference>
<dbReference type="PANTHER" id="PTHR19271">
    <property type="entry name" value="CYTOCHROME B"/>
    <property type="match status" value="1"/>
</dbReference>
<dbReference type="PANTHER" id="PTHR19271:SF16">
    <property type="entry name" value="CYTOCHROME B"/>
    <property type="match status" value="1"/>
</dbReference>
<dbReference type="Pfam" id="PF00032">
    <property type="entry name" value="Cytochrom_B_C"/>
    <property type="match status" value="1"/>
</dbReference>
<dbReference type="Pfam" id="PF00033">
    <property type="entry name" value="Cytochrome_B"/>
    <property type="match status" value="1"/>
</dbReference>
<dbReference type="PIRSF" id="PIRSF038885">
    <property type="entry name" value="COB"/>
    <property type="match status" value="1"/>
</dbReference>
<dbReference type="SUPFAM" id="SSF81648">
    <property type="entry name" value="a domain/subunit of cytochrome bc1 complex (Ubiquinol-cytochrome c reductase)"/>
    <property type="match status" value="1"/>
</dbReference>
<dbReference type="SUPFAM" id="SSF81342">
    <property type="entry name" value="Transmembrane di-heme cytochromes"/>
    <property type="match status" value="1"/>
</dbReference>
<dbReference type="PROSITE" id="PS51003">
    <property type="entry name" value="CYTB_CTER"/>
    <property type="match status" value="1"/>
</dbReference>
<dbReference type="PROSITE" id="PS51002">
    <property type="entry name" value="CYTB_NTER"/>
    <property type="match status" value="1"/>
</dbReference>
<protein>
    <recommendedName>
        <fullName>Cytochrome b</fullName>
    </recommendedName>
    <alternativeName>
        <fullName>Complex III subunit 3</fullName>
    </alternativeName>
    <alternativeName>
        <fullName>Complex III subunit III</fullName>
    </alternativeName>
    <alternativeName>
        <fullName>Cytochrome b-c1 complex subunit 3</fullName>
    </alternativeName>
    <alternativeName>
        <fullName>Ubiquinol-cytochrome-c reductase complex cytochrome b subunit</fullName>
    </alternativeName>
</protein>
<reference key="1">
    <citation type="journal article" date="2003" name="J. Mammal. Evol.">
        <title>Phylogeny and evolutionary history of the ground squirrels (Rodentia: Marmotinae).</title>
        <authorList>
            <person name="Harrison R.G."/>
            <person name="Bogdanowicz S.M."/>
            <person name="Hoffmann R.S."/>
            <person name="Yensen E."/>
            <person name="Sherman P.W."/>
        </authorList>
    </citation>
    <scope>NUCLEOTIDE SEQUENCE [GENOMIC DNA]</scope>
</reference>